<accession>P0DF32</accession>
<accession>Q8K8W2</accession>
<organism>
    <name type="scientific">Streptococcus pyogenes serotype M3 (strain ATCC BAA-595 / MGAS315)</name>
    <dbReference type="NCBI Taxonomy" id="198466"/>
    <lineage>
        <taxon>Bacteria</taxon>
        <taxon>Bacillati</taxon>
        <taxon>Bacillota</taxon>
        <taxon>Bacilli</taxon>
        <taxon>Lactobacillales</taxon>
        <taxon>Streptococcaceae</taxon>
        <taxon>Streptococcus</taxon>
    </lineage>
</organism>
<proteinExistence type="inferred from homology"/>
<sequence length="1207" mass="134696">MVDVNRFKSMQITLASPSKVRSWSYGEVKKPETINYRTLKPEREGLFDEVIFGPTKDWECACGKYKRIRYKGIVCDRCGVEVTRAKVRRERMGHIELKAPVSHIWYFKGIPSRMGLTLDMSPRALEEVIYFAAYVVIDPKDTPLEPKSLLTEREYREKLQEYGHGSFVAKMGAEAIQDLLKRVDLAAEIAELKEELKSASGQKRIKAVRRLDVLDAFNKSGNKPEWMVLNILPVIPPDLRPMVQLDGGRFAASDLNDLYRRVINRNNRLARLLELNAPGIIVQNEKRMLQEAVDALIDNGRRGRPITGPGSRPLKSLSHMLKGKQGRFRQNLLGKRVDFSGRSVIAVGPTLKMYQCGVPREMAIELFKPFVMREIVAKEYAGNVKAAKRMVERGDERIWDILEEVIKEHPVLLNRAPTLHRLGIQAFEPVLIDGKALRLHPLVCEAYNADFDGDQMAIHVPLSEEAQAEARLLMLAAEHILNPKDGKPVVTPSQDMVLGNYYLTMEDAGREGEGMIFKDKDEAVMAYRNGYAHLHSRVGIAVDSMPNKPWKDSQRHKIMVTTVGKILFNDIMPEDLPYLQEPNNANLTEGTPDKYFLEPGQDIQEVIDGLDINVPFKKKNLGNIIAETFKRFRTTETSAFLDRLKDLGYYHSTLAGLTVGIADIPVIDNKAEIIDAAHHRVEEINKAFRRGLMTDDDRYVAVTTTWREAKEALEKRLIETQDPKNPIVMMMDSGARGNISNFSQLAGMRGLMAAPNGRIMELPILSNFREGLSVLEMFFSTHGARKGMTDTALKTADSGYLTRRLVDVAQDVIIREDDCGTDRGLLIRAITDGKEVTETLEVRLQGRYTRKSVKHPETGEVLIGADQLITEDMARKIVDAGVEEVTIRSVFTCATRHGVCRHCYGINLATGDAVEVGEAVGTIAAQSIGEPGTQLTMRTFHTGGVASNTDITQGLPRIQEIFEARNPKGEAVITEVKGNVVEIEEDASTRTKKVYVQGKTGMGEYVVPFTARMKVEVGDEVNRGAALTEGSIQPKRLLEVRDTLSVETYLLAEVQKVYRSQGVEIGDKHVEVMVRQMLRKVRVMDPGDTDLLPGTLMDISDFTDANKDIVISGGIPATSRPVLMGITKASLETNSFLSAASFQETTRVLTDAAIRGKKDHLLGLKENVIIGKIIPAGTGMARYRNIEPQAMNEIEVIDHTEVSAEAE</sequence>
<protein>
    <recommendedName>
        <fullName evidence="1">DNA-directed RNA polymerase subunit beta'</fullName>
        <shortName evidence="1">RNAP subunit beta'</shortName>
        <ecNumber evidence="1">2.7.7.6</ecNumber>
    </recommendedName>
    <alternativeName>
        <fullName evidence="1">RNA polymerase subunit beta'</fullName>
    </alternativeName>
    <alternativeName>
        <fullName evidence="1">Transcriptase subunit beta'</fullName>
    </alternativeName>
</protein>
<dbReference type="EC" id="2.7.7.6" evidence="1"/>
<dbReference type="EMBL" id="AE014074">
    <property type="protein sequence ID" value="AAM78683.1"/>
    <property type="molecule type" value="Genomic_DNA"/>
</dbReference>
<dbReference type="RefSeq" id="WP_011054112.1">
    <property type="nucleotide sequence ID" value="NC_004070.1"/>
</dbReference>
<dbReference type="SMR" id="P0DF32"/>
<dbReference type="KEGG" id="spg:SpyM3_0076"/>
<dbReference type="HOGENOM" id="CLU_000524_3_1_9"/>
<dbReference type="Proteomes" id="UP000000564">
    <property type="component" value="Chromosome"/>
</dbReference>
<dbReference type="GO" id="GO:0000428">
    <property type="term" value="C:DNA-directed RNA polymerase complex"/>
    <property type="evidence" value="ECO:0007669"/>
    <property type="project" value="UniProtKB-KW"/>
</dbReference>
<dbReference type="GO" id="GO:0003677">
    <property type="term" value="F:DNA binding"/>
    <property type="evidence" value="ECO:0007669"/>
    <property type="project" value="UniProtKB-UniRule"/>
</dbReference>
<dbReference type="GO" id="GO:0003899">
    <property type="term" value="F:DNA-directed RNA polymerase activity"/>
    <property type="evidence" value="ECO:0007669"/>
    <property type="project" value="UniProtKB-UniRule"/>
</dbReference>
<dbReference type="GO" id="GO:0000287">
    <property type="term" value="F:magnesium ion binding"/>
    <property type="evidence" value="ECO:0007669"/>
    <property type="project" value="UniProtKB-UniRule"/>
</dbReference>
<dbReference type="GO" id="GO:0008270">
    <property type="term" value="F:zinc ion binding"/>
    <property type="evidence" value="ECO:0007669"/>
    <property type="project" value="UniProtKB-UniRule"/>
</dbReference>
<dbReference type="GO" id="GO:0006351">
    <property type="term" value="P:DNA-templated transcription"/>
    <property type="evidence" value="ECO:0007669"/>
    <property type="project" value="UniProtKB-UniRule"/>
</dbReference>
<dbReference type="CDD" id="cd02655">
    <property type="entry name" value="RNAP_beta'_C"/>
    <property type="match status" value="1"/>
</dbReference>
<dbReference type="CDD" id="cd01609">
    <property type="entry name" value="RNAP_beta'_N"/>
    <property type="match status" value="1"/>
</dbReference>
<dbReference type="FunFam" id="1.10.150.390:FF:000002">
    <property type="entry name" value="DNA-directed RNA polymerase subunit beta"/>
    <property type="match status" value="1"/>
</dbReference>
<dbReference type="FunFam" id="4.10.860.120:FF:000001">
    <property type="entry name" value="DNA-directed RNA polymerase subunit beta"/>
    <property type="match status" value="1"/>
</dbReference>
<dbReference type="Gene3D" id="1.10.132.30">
    <property type="match status" value="1"/>
</dbReference>
<dbReference type="Gene3D" id="1.10.150.390">
    <property type="match status" value="1"/>
</dbReference>
<dbReference type="Gene3D" id="1.10.1790.20">
    <property type="match status" value="1"/>
</dbReference>
<dbReference type="Gene3D" id="1.10.40.90">
    <property type="match status" value="1"/>
</dbReference>
<dbReference type="Gene3D" id="2.40.40.20">
    <property type="match status" value="1"/>
</dbReference>
<dbReference type="Gene3D" id="2.40.50.100">
    <property type="match status" value="1"/>
</dbReference>
<dbReference type="Gene3D" id="4.10.860.120">
    <property type="entry name" value="RNA polymerase II, clamp domain"/>
    <property type="match status" value="1"/>
</dbReference>
<dbReference type="Gene3D" id="1.10.274.100">
    <property type="entry name" value="RNA polymerase Rpb1, domain 3"/>
    <property type="match status" value="2"/>
</dbReference>
<dbReference type="HAMAP" id="MF_01322">
    <property type="entry name" value="RNApol_bact_RpoC"/>
    <property type="match status" value="1"/>
</dbReference>
<dbReference type="InterPro" id="IPR045867">
    <property type="entry name" value="DNA-dir_RpoC_beta_prime"/>
</dbReference>
<dbReference type="InterPro" id="IPR012754">
    <property type="entry name" value="DNA-dir_RpoC_beta_prime_bact"/>
</dbReference>
<dbReference type="InterPro" id="IPR000722">
    <property type="entry name" value="RNA_pol_asu"/>
</dbReference>
<dbReference type="InterPro" id="IPR006592">
    <property type="entry name" value="RNA_pol_N"/>
</dbReference>
<dbReference type="InterPro" id="IPR007080">
    <property type="entry name" value="RNA_pol_Rpb1_1"/>
</dbReference>
<dbReference type="InterPro" id="IPR007066">
    <property type="entry name" value="RNA_pol_Rpb1_3"/>
</dbReference>
<dbReference type="InterPro" id="IPR042102">
    <property type="entry name" value="RNA_pol_Rpb1_3_sf"/>
</dbReference>
<dbReference type="InterPro" id="IPR007083">
    <property type="entry name" value="RNA_pol_Rpb1_4"/>
</dbReference>
<dbReference type="InterPro" id="IPR007081">
    <property type="entry name" value="RNA_pol_Rpb1_5"/>
</dbReference>
<dbReference type="InterPro" id="IPR044893">
    <property type="entry name" value="RNA_pol_Rpb1_clamp_domain"/>
</dbReference>
<dbReference type="InterPro" id="IPR038120">
    <property type="entry name" value="Rpb1_funnel_sf"/>
</dbReference>
<dbReference type="NCBIfam" id="TIGR02386">
    <property type="entry name" value="rpoC_TIGR"/>
    <property type="match status" value="1"/>
</dbReference>
<dbReference type="PANTHER" id="PTHR19376">
    <property type="entry name" value="DNA-DIRECTED RNA POLYMERASE"/>
    <property type="match status" value="1"/>
</dbReference>
<dbReference type="PANTHER" id="PTHR19376:SF54">
    <property type="entry name" value="DNA-DIRECTED RNA POLYMERASE SUBUNIT BETA"/>
    <property type="match status" value="1"/>
</dbReference>
<dbReference type="Pfam" id="PF04997">
    <property type="entry name" value="RNA_pol_Rpb1_1"/>
    <property type="match status" value="1"/>
</dbReference>
<dbReference type="Pfam" id="PF00623">
    <property type="entry name" value="RNA_pol_Rpb1_2"/>
    <property type="match status" value="2"/>
</dbReference>
<dbReference type="Pfam" id="PF04983">
    <property type="entry name" value="RNA_pol_Rpb1_3"/>
    <property type="match status" value="1"/>
</dbReference>
<dbReference type="Pfam" id="PF05000">
    <property type="entry name" value="RNA_pol_Rpb1_4"/>
    <property type="match status" value="1"/>
</dbReference>
<dbReference type="Pfam" id="PF04998">
    <property type="entry name" value="RNA_pol_Rpb1_5"/>
    <property type="match status" value="1"/>
</dbReference>
<dbReference type="SMART" id="SM00663">
    <property type="entry name" value="RPOLA_N"/>
    <property type="match status" value="1"/>
</dbReference>
<dbReference type="SUPFAM" id="SSF64484">
    <property type="entry name" value="beta and beta-prime subunits of DNA dependent RNA-polymerase"/>
    <property type="match status" value="1"/>
</dbReference>
<feature type="chain" id="PRO_0000067812" description="DNA-directed RNA polymerase subunit beta'">
    <location>
        <begin position="1"/>
        <end position="1207"/>
    </location>
</feature>
<feature type="binding site" evidence="1">
    <location>
        <position position="60"/>
    </location>
    <ligand>
        <name>Zn(2+)</name>
        <dbReference type="ChEBI" id="CHEBI:29105"/>
        <label>1</label>
    </ligand>
</feature>
<feature type="binding site" evidence="1">
    <location>
        <position position="62"/>
    </location>
    <ligand>
        <name>Zn(2+)</name>
        <dbReference type="ChEBI" id="CHEBI:29105"/>
        <label>1</label>
    </ligand>
</feature>
<feature type="binding site" evidence="1">
    <location>
        <position position="75"/>
    </location>
    <ligand>
        <name>Zn(2+)</name>
        <dbReference type="ChEBI" id="CHEBI:29105"/>
        <label>1</label>
    </ligand>
</feature>
<feature type="binding site" evidence="1">
    <location>
        <position position="78"/>
    </location>
    <ligand>
        <name>Zn(2+)</name>
        <dbReference type="ChEBI" id="CHEBI:29105"/>
        <label>1</label>
    </ligand>
</feature>
<feature type="binding site" evidence="1">
    <location>
        <position position="450"/>
    </location>
    <ligand>
        <name>Mg(2+)</name>
        <dbReference type="ChEBI" id="CHEBI:18420"/>
    </ligand>
</feature>
<feature type="binding site" evidence="1">
    <location>
        <position position="452"/>
    </location>
    <ligand>
        <name>Mg(2+)</name>
        <dbReference type="ChEBI" id="CHEBI:18420"/>
    </ligand>
</feature>
<feature type="binding site" evidence="1">
    <location>
        <position position="454"/>
    </location>
    <ligand>
        <name>Mg(2+)</name>
        <dbReference type="ChEBI" id="CHEBI:18420"/>
    </ligand>
</feature>
<feature type="binding site" evidence="1">
    <location>
        <position position="819"/>
    </location>
    <ligand>
        <name>Zn(2+)</name>
        <dbReference type="ChEBI" id="CHEBI:29105"/>
        <label>2</label>
    </ligand>
</feature>
<feature type="binding site" evidence="1">
    <location>
        <position position="893"/>
    </location>
    <ligand>
        <name>Zn(2+)</name>
        <dbReference type="ChEBI" id="CHEBI:29105"/>
        <label>2</label>
    </ligand>
</feature>
<feature type="binding site" evidence="1">
    <location>
        <position position="900"/>
    </location>
    <ligand>
        <name>Zn(2+)</name>
        <dbReference type="ChEBI" id="CHEBI:29105"/>
        <label>2</label>
    </ligand>
</feature>
<feature type="binding site" evidence="1">
    <location>
        <position position="903"/>
    </location>
    <ligand>
        <name>Zn(2+)</name>
        <dbReference type="ChEBI" id="CHEBI:29105"/>
        <label>2</label>
    </ligand>
</feature>
<name>RPOC_STRP3</name>
<keyword id="KW-0240">DNA-directed RNA polymerase</keyword>
<keyword id="KW-0460">Magnesium</keyword>
<keyword id="KW-0479">Metal-binding</keyword>
<keyword id="KW-0548">Nucleotidyltransferase</keyword>
<keyword id="KW-0804">Transcription</keyword>
<keyword id="KW-0808">Transferase</keyword>
<keyword id="KW-0862">Zinc</keyword>
<gene>
    <name evidence="1" type="primary">rpoC</name>
    <name type="ordered locus">SpyM3_0076</name>
</gene>
<comment type="function">
    <text evidence="1">DNA-dependent RNA polymerase catalyzes the transcription of DNA into RNA using the four ribonucleoside triphosphates as substrates.</text>
</comment>
<comment type="catalytic activity">
    <reaction evidence="1">
        <text>RNA(n) + a ribonucleoside 5'-triphosphate = RNA(n+1) + diphosphate</text>
        <dbReference type="Rhea" id="RHEA:21248"/>
        <dbReference type="Rhea" id="RHEA-COMP:14527"/>
        <dbReference type="Rhea" id="RHEA-COMP:17342"/>
        <dbReference type="ChEBI" id="CHEBI:33019"/>
        <dbReference type="ChEBI" id="CHEBI:61557"/>
        <dbReference type="ChEBI" id="CHEBI:140395"/>
        <dbReference type="EC" id="2.7.7.6"/>
    </reaction>
</comment>
<comment type="cofactor">
    <cofactor evidence="1">
        <name>Mg(2+)</name>
        <dbReference type="ChEBI" id="CHEBI:18420"/>
    </cofactor>
    <text evidence="1">Binds 1 Mg(2+) ion per subunit.</text>
</comment>
<comment type="cofactor">
    <cofactor evidence="1">
        <name>Zn(2+)</name>
        <dbReference type="ChEBI" id="CHEBI:29105"/>
    </cofactor>
    <text evidence="1">Binds 2 Zn(2+) ions per subunit.</text>
</comment>
<comment type="subunit">
    <text evidence="1">The RNAP catalytic core consists of 2 alpha, 1 beta, 1 beta' and 1 omega subunit. When a sigma factor is associated with the core the holoenzyme is formed, which can initiate transcription.</text>
</comment>
<comment type="similarity">
    <text evidence="1">Belongs to the RNA polymerase beta' chain family.</text>
</comment>
<reference key="1">
    <citation type="journal article" date="2002" name="Proc. Natl. Acad. Sci. U.S.A.">
        <title>Genome sequence of a serotype M3 strain of group A Streptococcus: phage-encoded toxins, the high-virulence phenotype, and clone emergence.</title>
        <authorList>
            <person name="Beres S.B."/>
            <person name="Sylva G.L."/>
            <person name="Barbian K.D."/>
            <person name="Lei B."/>
            <person name="Hoff J.S."/>
            <person name="Mammarella N.D."/>
            <person name="Liu M.-Y."/>
            <person name="Smoot J.C."/>
            <person name="Porcella S.F."/>
            <person name="Parkins L.D."/>
            <person name="Campbell D.S."/>
            <person name="Smith T.M."/>
            <person name="McCormick J.K."/>
            <person name="Leung D.Y.M."/>
            <person name="Schlievert P.M."/>
            <person name="Musser J.M."/>
        </authorList>
    </citation>
    <scope>NUCLEOTIDE SEQUENCE [LARGE SCALE GENOMIC DNA]</scope>
    <source>
        <strain>ATCC BAA-595 / MGAS315</strain>
    </source>
</reference>
<evidence type="ECO:0000255" key="1">
    <source>
        <dbReference type="HAMAP-Rule" id="MF_01322"/>
    </source>
</evidence>